<organism>
    <name type="scientific">Verminephrobacter eiseniae (strain EF01-2)</name>
    <dbReference type="NCBI Taxonomy" id="391735"/>
    <lineage>
        <taxon>Bacteria</taxon>
        <taxon>Pseudomonadati</taxon>
        <taxon>Pseudomonadota</taxon>
        <taxon>Betaproteobacteria</taxon>
        <taxon>Burkholderiales</taxon>
        <taxon>Comamonadaceae</taxon>
        <taxon>Verminephrobacter</taxon>
    </lineage>
</organism>
<name>MNMG_VEREI</name>
<feature type="chain" id="PRO_0000345358" description="tRNA uridine 5-carboxymethylaminomethyl modification enzyme MnmG">
    <location>
        <begin position="1"/>
        <end position="658"/>
    </location>
</feature>
<feature type="binding site" evidence="1">
    <location>
        <begin position="13"/>
        <end position="18"/>
    </location>
    <ligand>
        <name>FAD</name>
        <dbReference type="ChEBI" id="CHEBI:57692"/>
    </ligand>
</feature>
<feature type="binding site" evidence="1">
    <location>
        <begin position="285"/>
        <end position="299"/>
    </location>
    <ligand>
        <name>NAD(+)</name>
        <dbReference type="ChEBI" id="CHEBI:57540"/>
    </ligand>
</feature>
<evidence type="ECO:0000255" key="1">
    <source>
        <dbReference type="HAMAP-Rule" id="MF_00129"/>
    </source>
</evidence>
<evidence type="ECO:0000305" key="2"/>
<proteinExistence type="inferred from homology"/>
<protein>
    <recommendedName>
        <fullName evidence="1">tRNA uridine 5-carboxymethylaminomethyl modification enzyme MnmG</fullName>
    </recommendedName>
    <alternativeName>
        <fullName evidence="1">Glucose-inhibited division protein A</fullName>
    </alternativeName>
</protein>
<gene>
    <name evidence="1" type="primary">mnmG</name>
    <name evidence="1" type="synonym">gidA</name>
    <name type="ordered locus">Veis_1063</name>
</gene>
<keyword id="KW-0963">Cytoplasm</keyword>
<keyword id="KW-0274">FAD</keyword>
<keyword id="KW-0285">Flavoprotein</keyword>
<keyword id="KW-0520">NAD</keyword>
<keyword id="KW-1185">Reference proteome</keyword>
<keyword id="KW-0819">tRNA processing</keyword>
<dbReference type="EMBL" id="CP000542">
    <property type="protein sequence ID" value="ABM56839.1"/>
    <property type="status" value="ALT_INIT"/>
    <property type="molecule type" value="Genomic_DNA"/>
</dbReference>
<dbReference type="RefSeq" id="WP_041949824.1">
    <property type="nucleotide sequence ID" value="NC_008786.1"/>
</dbReference>
<dbReference type="SMR" id="A1WGT2"/>
<dbReference type="STRING" id="391735.Veis_1063"/>
<dbReference type="GeneID" id="76459737"/>
<dbReference type="KEGG" id="vei:Veis_1063"/>
<dbReference type="eggNOG" id="COG0445">
    <property type="taxonomic scope" value="Bacteria"/>
</dbReference>
<dbReference type="HOGENOM" id="CLU_007831_2_2_4"/>
<dbReference type="OrthoDB" id="9815560at2"/>
<dbReference type="Proteomes" id="UP000000374">
    <property type="component" value="Chromosome"/>
</dbReference>
<dbReference type="GO" id="GO:0005829">
    <property type="term" value="C:cytosol"/>
    <property type="evidence" value="ECO:0007669"/>
    <property type="project" value="TreeGrafter"/>
</dbReference>
<dbReference type="GO" id="GO:0050660">
    <property type="term" value="F:flavin adenine dinucleotide binding"/>
    <property type="evidence" value="ECO:0007669"/>
    <property type="project" value="UniProtKB-UniRule"/>
</dbReference>
<dbReference type="GO" id="GO:0030488">
    <property type="term" value="P:tRNA methylation"/>
    <property type="evidence" value="ECO:0007669"/>
    <property type="project" value="TreeGrafter"/>
</dbReference>
<dbReference type="GO" id="GO:0002098">
    <property type="term" value="P:tRNA wobble uridine modification"/>
    <property type="evidence" value="ECO:0007669"/>
    <property type="project" value="InterPro"/>
</dbReference>
<dbReference type="FunFam" id="1.10.10.1800:FF:000001">
    <property type="entry name" value="tRNA uridine 5-carboxymethylaminomethyl modification enzyme MnmG"/>
    <property type="match status" value="1"/>
</dbReference>
<dbReference type="FunFam" id="1.10.150.570:FF:000001">
    <property type="entry name" value="tRNA uridine 5-carboxymethylaminomethyl modification enzyme MnmG"/>
    <property type="match status" value="1"/>
</dbReference>
<dbReference type="FunFam" id="3.50.50.60:FF:000002">
    <property type="entry name" value="tRNA uridine 5-carboxymethylaminomethyl modification enzyme MnmG"/>
    <property type="match status" value="1"/>
</dbReference>
<dbReference type="FunFam" id="3.50.50.60:FF:000010">
    <property type="entry name" value="tRNA uridine 5-carboxymethylaminomethyl modification enzyme MnmG"/>
    <property type="match status" value="1"/>
</dbReference>
<dbReference type="Gene3D" id="3.50.50.60">
    <property type="entry name" value="FAD/NAD(P)-binding domain"/>
    <property type="match status" value="2"/>
</dbReference>
<dbReference type="Gene3D" id="1.10.150.570">
    <property type="entry name" value="GidA associated domain, C-terminal subdomain"/>
    <property type="match status" value="1"/>
</dbReference>
<dbReference type="Gene3D" id="1.10.10.1800">
    <property type="entry name" value="tRNA uridine 5-carboxymethylaminomethyl modification enzyme MnmG/GidA"/>
    <property type="match status" value="1"/>
</dbReference>
<dbReference type="HAMAP" id="MF_00129">
    <property type="entry name" value="MnmG_GidA"/>
    <property type="match status" value="1"/>
</dbReference>
<dbReference type="InterPro" id="IPR036188">
    <property type="entry name" value="FAD/NAD-bd_sf"/>
</dbReference>
<dbReference type="InterPro" id="IPR049312">
    <property type="entry name" value="GIDA_C_N"/>
</dbReference>
<dbReference type="InterPro" id="IPR004416">
    <property type="entry name" value="MnmG"/>
</dbReference>
<dbReference type="InterPro" id="IPR002218">
    <property type="entry name" value="MnmG-rel"/>
</dbReference>
<dbReference type="InterPro" id="IPR020595">
    <property type="entry name" value="MnmG-rel_CS"/>
</dbReference>
<dbReference type="InterPro" id="IPR026904">
    <property type="entry name" value="MnmG_C"/>
</dbReference>
<dbReference type="InterPro" id="IPR047001">
    <property type="entry name" value="MnmG_C_subdom"/>
</dbReference>
<dbReference type="InterPro" id="IPR044920">
    <property type="entry name" value="MnmG_C_subdom_sf"/>
</dbReference>
<dbReference type="InterPro" id="IPR040131">
    <property type="entry name" value="MnmG_N"/>
</dbReference>
<dbReference type="NCBIfam" id="TIGR00136">
    <property type="entry name" value="mnmG_gidA"/>
    <property type="match status" value="1"/>
</dbReference>
<dbReference type="PANTHER" id="PTHR11806">
    <property type="entry name" value="GLUCOSE INHIBITED DIVISION PROTEIN A"/>
    <property type="match status" value="1"/>
</dbReference>
<dbReference type="PANTHER" id="PTHR11806:SF0">
    <property type="entry name" value="PROTEIN MTO1 HOMOLOG, MITOCHONDRIAL"/>
    <property type="match status" value="1"/>
</dbReference>
<dbReference type="Pfam" id="PF01134">
    <property type="entry name" value="GIDA"/>
    <property type="match status" value="1"/>
</dbReference>
<dbReference type="Pfam" id="PF21680">
    <property type="entry name" value="GIDA_C_1st"/>
    <property type="match status" value="1"/>
</dbReference>
<dbReference type="Pfam" id="PF13932">
    <property type="entry name" value="SAM_GIDA_C"/>
    <property type="match status" value="1"/>
</dbReference>
<dbReference type="SMART" id="SM01228">
    <property type="entry name" value="GIDA_assoc_3"/>
    <property type="match status" value="1"/>
</dbReference>
<dbReference type="SUPFAM" id="SSF51905">
    <property type="entry name" value="FAD/NAD(P)-binding domain"/>
    <property type="match status" value="1"/>
</dbReference>
<dbReference type="PROSITE" id="PS01280">
    <property type="entry name" value="GIDA_1"/>
    <property type="match status" value="1"/>
</dbReference>
<dbReference type="PROSITE" id="PS01281">
    <property type="entry name" value="GIDA_2"/>
    <property type="match status" value="1"/>
</dbReference>
<sequence>MLYPQEFDVIVVGAGHAGTEAALAAARLGQRTLLLTQSLETLGQMSCNPSIGGIGKGHLVKEVDALGGAMALATDESGIQFRILNRSKGPAVRATRAQADRLLYKAAIRRRLENQPGLWLFQQAVDDLMLEGDRVVGAVTQVGVVFCARAVVLTAGTFLDGKIHVGLSHYAAGRAGEPSAIGLSARLKELKLPQGRLKTGTPPRIDGRSIDWSQCEEQPGDGMPGGVNAGQVPVFSFMAHAYGGARMHPQQLPCWITHTNQRTHAIIRSGFDRSPMFTGSIEGVGPRYCPSVEDKINRFADKDSHQVFLEPEGLGTHEVYPNGISTSLPFDIQYQLVRSMAGLENAHILRPGYAIEYDYFDPRALKSNFETRQIRGLFFAGQINGTTGYEEAAAQGLFAGVNAALQCRGDAPWLPGRDQAYLGVLVDDLITKGVTEPYRMFTSRAEFRLQLREDNADMRLTEVGRRMGLVDDARWEVFSRKRDAVLRETERLKATWVNPRNLPDIESGRVLGKPMAHEYSLFELLRRPDVDYAGLMSLDGGKYAAADVSRETLGMLSESVVEQVEIAAKYAGYIERQKGEVERAAHFETLRLPAGLDYAQVTALSIEARQVLSRHRPETLGQASRITGITPAAISLLLVHLKKGGFKGFMSANADAQA</sequence>
<accession>A1WGT2</accession>
<reference key="1">
    <citation type="submission" date="2006-12" db="EMBL/GenBank/DDBJ databases">
        <title>Complete sequence of chromosome 1 of Verminephrobacter eiseniae EF01-2.</title>
        <authorList>
            <person name="Copeland A."/>
            <person name="Lucas S."/>
            <person name="Lapidus A."/>
            <person name="Barry K."/>
            <person name="Detter J.C."/>
            <person name="Glavina del Rio T."/>
            <person name="Dalin E."/>
            <person name="Tice H."/>
            <person name="Pitluck S."/>
            <person name="Chertkov O."/>
            <person name="Brettin T."/>
            <person name="Bruce D."/>
            <person name="Han C."/>
            <person name="Tapia R."/>
            <person name="Gilna P."/>
            <person name="Schmutz J."/>
            <person name="Larimer F."/>
            <person name="Land M."/>
            <person name="Hauser L."/>
            <person name="Kyrpides N."/>
            <person name="Kim E."/>
            <person name="Stahl D."/>
            <person name="Richardson P."/>
        </authorList>
    </citation>
    <scope>NUCLEOTIDE SEQUENCE [LARGE SCALE GENOMIC DNA]</scope>
    <source>
        <strain>EF01-2</strain>
    </source>
</reference>
<comment type="function">
    <text evidence="1">NAD-binding protein involved in the addition of a carboxymethylaminomethyl (cmnm) group at the wobble position (U34) of certain tRNAs, forming tRNA-cmnm(5)s(2)U34.</text>
</comment>
<comment type="cofactor">
    <cofactor evidence="1">
        <name>FAD</name>
        <dbReference type="ChEBI" id="CHEBI:57692"/>
    </cofactor>
</comment>
<comment type="subunit">
    <text evidence="1">Homodimer. Heterotetramer of two MnmE and two MnmG subunits.</text>
</comment>
<comment type="subcellular location">
    <subcellularLocation>
        <location evidence="1">Cytoplasm</location>
    </subcellularLocation>
</comment>
<comment type="similarity">
    <text evidence="1">Belongs to the MnmG family.</text>
</comment>
<comment type="sequence caution" evidence="2">
    <conflict type="erroneous initiation">
        <sequence resource="EMBL-CDS" id="ABM56839"/>
    </conflict>
</comment>